<dbReference type="EC" id="3.4.24.15" evidence="2"/>
<dbReference type="EMBL" id="D21871">
    <property type="protein sequence ID" value="BAA04882.1"/>
    <property type="molecule type" value="mRNA"/>
</dbReference>
<dbReference type="EMBL" id="AB000438">
    <property type="protein sequence ID" value="BAA19107.1"/>
    <property type="molecule type" value="Genomic_DNA"/>
</dbReference>
<dbReference type="PIR" id="S43250">
    <property type="entry name" value="S43250"/>
</dbReference>
<dbReference type="RefSeq" id="NP_999388.1">
    <property type="nucleotide sequence ID" value="NM_214223.2"/>
</dbReference>
<dbReference type="SMR" id="P47788"/>
<dbReference type="FunCoup" id="P47788">
    <property type="interactions" value="1811"/>
</dbReference>
<dbReference type="STRING" id="9823.ENSSSCP00000044095"/>
<dbReference type="MEROPS" id="M03.001"/>
<dbReference type="GlyGen" id="P47788">
    <property type="glycosylation" value="1 site"/>
</dbReference>
<dbReference type="PaxDb" id="9823-ENSSSCP00000014316"/>
<dbReference type="PeptideAtlas" id="P47788"/>
<dbReference type="GeneID" id="397442"/>
<dbReference type="KEGG" id="ssc:397442"/>
<dbReference type="CTD" id="7064"/>
<dbReference type="eggNOG" id="KOG2089">
    <property type="taxonomic scope" value="Eukaryota"/>
</dbReference>
<dbReference type="InParanoid" id="P47788"/>
<dbReference type="OrthoDB" id="534666at2759"/>
<dbReference type="Proteomes" id="UP000008227">
    <property type="component" value="Unplaced"/>
</dbReference>
<dbReference type="Proteomes" id="UP000314985">
    <property type="component" value="Unplaced"/>
</dbReference>
<dbReference type="Proteomes" id="UP000694570">
    <property type="component" value="Unplaced"/>
</dbReference>
<dbReference type="Proteomes" id="UP000694571">
    <property type="component" value="Unplaced"/>
</dbReference>
<dbReference type="Proteomes" id="UP000694720">
    <property type="component" value="Unplaced"/>
</dbReference>
<dbReference type="Proteomes" id="UP000694722">
    <property type="component" value="Unplaced"/>
</dbReference>
<dbReference type="Proteomes" id="UP000694723">
    <property type="component" value="Unplaced"/>
</dbReference>
<dbReference type="Proteomes" id="UP000694724">
    <property type="component" value="Unplaced"/>
</dbReference>
<dbReference type="Proteomes" id="UP000694725">
    <property type="component" value="Unplaced"/>
</dbReference>
<dbReference type="Proteomes" id="UP000694726">
    <property type="component" value="Unplaced"/>
</dbReference>
<dbReference type="Proteomes" id="UP000694727">
    <property type="component" value="Unplaced"/>
</dbReference>
<dbReference type="Proteomes" id="UP000694728">
    <property type="component" value="Unplaced"/>
</dbReference>
<dbReference type="GO" id="GO:0005758">
    <property type="term" value="C:mitochondrial intermembrane space"/>
    <property type="evidence" value="ECO:0000318"/>
    <property type="project" value="GO_Central"/>
</dbReference>
<dbReference type="GO" id="GO:0046872">
    <property type="term" value="F:metal ion binding"/>
    <property type="evidence" value="ECO:0007669"/>
    <property type="project" value="UniProtKB-KW"/>
</dbReference>
<dbReference type="GO" id="GO:0004222">
    <property type="term" value="F:metalloendopeptidase activity"/>
    <property type="evidence" value="ECO:0000318"/>
    <property type="project" value="GO_Central"/>
</dbReference>
<dbReference type="GO" id="GO:0006518">
    <property type="term" value="P:peptide metabolic process"/>
    <property type="evidence" value="ECO:0000318"/>
    <property type="project" value="GO_Central"/>
</dbReference>
<dbReference type="GO" id="GO:0006508">
    <property type="term" value="P:proteolysis"/>
    <property type="evidence" value="ECO:0000318"/>
    <property type="project" value="GO_Central"/>
</dbReference>
<dbReference type="CDD" id="cd06455">
    <property type="entry name" value="M3A_TOP"/>
    <property type="match status" value="1"/>
</dbReference>
<dbReference type="FunFam" id="1.10.1370.10:FF:000016">
    <property type="entry name" value="Thimet oligopeptidase 1"/>
    <property type="match status" value="1"/>
</dbReference>
<dbReference type="FunFam" id="1.20.1050.40:FF:000001">
    <property type="entry name" value="Thimet oligopeptidase 1"/>
    <property type="match status" value="1"/>
</dbReference>
<dbReference type="FunFam" id="3.40.390.10:FF:000006">
    <property type="entry name" value="Thimet oligopeptidase 1"/>
    <property type="match status" value="1"/>
</dbReference>
<dbReference type="Gene3D" id="3.40.390.10">
    <property type="entry name" value="Collagenase (Catalytic Domain)"/>
    <property type="match status" value="1"/>
</dbReference>
<dbReference type="Gene3D" id="1.20.1050.40">
    <property type="entry name" value="Endopeptidase. Chain P, domain 1"/>
    <property type="match status" value="1"/>
</dbReference>
<dbReference type="Gene3D" id="1.10.1370.10">
    <property type="entry name" value="Neurolysin, domain 3"/>
    <property type="match status" value="1"/>
</dbReference>
<dbReference type="InterPro" id="IPR024079">
    <property type="entry name" value="MetalloPept_cat_dom_sf"/>
</dbReference>
<dbReference type="InterPro" id="IPR024077">
    <property type="entry name" value="Neurolysin/TOP_dom2"/>
</dbReference>
<dbReference type="InterPro" id="IPR024080">
    <property type="entry name" value="Neurolysin/TOP_N"/>
</dbReference>
<dbReference type="InterPro" id="IPR045090">
    <property type="entry name" value="Pept_M3A_M3B"/>
</dbReference>
<dbReference type="InterPro" id="IPR001567">
    <property type="entry name" value="Pept_M3A_M3B_dom"/>
</dbReference>
<dbReference type="PANTHER" id="PTHR11804">
    <property type="entry name" value="PROTEASE M3 THIMET OLIGOPEPTIDASE-RELATED"/>
    <property type="match status" value="1"/>
</dbReference>
<dbReference type="PANTHER" id="PTHR11804:SF50">
    <property type="entry name" value="THIMET OLIGOPEPTIDASE"/>
    <property type="match status" value="1"/>
</dbReference>
<dbReference type="Pfam" id="PF01432">
    <property type="entry name" value="Peptidase_M3"/>
    <property type="match status" value="1"/>
</dbReference>
<dbReference type="SUPFAM" id="SSF55486">
    <property type="entry name" value="Metalloproteases ('zincins'), catalytic domain"/>
    <property type="match status" value="1"/>
</dbReference>
<dbReference type="PROSITE" id="PS00142">
    <property type="entry name" value="ZINC_PROTEASE"/>
    <property type="match status" value="1"/>
</dbReference>
<name>THOP1_PIG</name>
<organism>
    <name type="scientific">Sus scrofa</name>
    <name type="common">Pig</name>
    <dbReference type="NCBI Taxonomy" id="9823"/>
    <lineage>
        <taxon>Eukaryota</taxon>
        <taxon>Metazoa</taxon>
        <taxon>Chordata</taxon>
        <taxon>Craniata</taxon>
        <taxon>Vertebrata</taxon>
        <taxon>Euteleostomi</taxon>
        <taxon>Mammalia</taxon>
        <taxon>Eutheria</taxon>
        <taxon>Laurasiatheria</taxon>
        <taxon>Artiodactyla</taxon>
        <taxon>Suina</taxon>
        <taxon>Suidae</taxon>
        <taxon>Sus</taxon>
    </lineage>
</organism>
<gene>
    <name type="primary">THOP1</name>
</gene>
<keyword id="KW-0007">Acetylation</keyword>
<keyword id="KW-0963">Cytoplasm</keyword>
<keyword id="KW-0378">Hydrolase</keyword>
<keyword id="KW-0479">Metal-binding</keyword>
<keyword id="KW-0482">Metalloprotease</keyword>
<keyword id="KW-0597">Phosphoprotein</keyword>
<keyword id="KW-0645">Protease</keyword>
<keyword id="KW-1185">Reference proteome</keyword>
<keyword id="KW-0862">Zinc</keyword>
<comment type="function">
    <text evidence="1 2">Involved in the metabolism of neuropeptides under 20 amino acid residues long (By similarity). Involved in cytoplasmic peptide degradation. Able to degrade the amyloid-beta precursor protein and generate amyloidogenic fragments (By similarity). Also acts as a regulator of cannabinoid signaling pathway by mediating degradation of hemopressin, an antagonist peptide of the cannabinoid receptor CNR1 (By similarity).</text>
</comment>
<comment type="catalytic activity">
    <reaction evidence="2">
        <text>Preferential cleavage of bonds with hydrophobic residues at P1, P2 and P3' and a small residue at P1' in substrates of 5 to 15 residues.</text>
        <dbReference type="EC" id="3.4.24.15"/>
    </reaction>
</comment>
<comment type="cofactor">
    <cofactor evidence="2">
        <name>Zn(2+)</name>
        <dbReference type="ChEBI" id="CHEBI:29105"/>
    </cofactor>
    <text evidence="2">Binds 1 zinc ion per subunit.</text>
</comment>
<comment type="subunit">
    <text evidence="5">Monomer.</text>
</comment>
<comment type="subcellular location">
    <subcellularLocation>
        <location evidence="5">Cytoplasm</location>
    </subcellularLocation>
</comment>
<comment type="tissue specificity">
    <text evidence="5">Ubiquitous.</text>
</comment>
<comment type="similarity">
    <text evidence="6">Belongs to the peptidase M3 family.</text>
</comment>
<evidence type="ECO:0000250" key="1">
    <source>
        <dbReference type="UniProtKB" id="P24155"/>
    </source>
</evidence>
<evidence type="ECO:0000250" key="2">
    <source>
        <dbReference type="UniProtKB" id="P52888"/>
    </source>
</evidence>
<evidence type="ECO:0000250" key="3">
    <source>
        <dbReference type="UniProtKB" id="Q8C1A5"/>
    </source>
</evidence>
<evidence type="ECO:0000255" key="4">
    <source>
        <dbReference type="PROSITE-ProRule" id="PRU10095"/>
    </source>
</evidence>
<evidence type="ECO:0000269" key="5">
    <source>
    </source>
</evidence>
<evidence type="ECO:0000305" key="6"/>
<protein>
    <recommendedName>
        <fullName>Thimet oligopeptidase</fullName>
        <ecNumber evidence="2">3.4.24.15</ecNumber>
    </recommendedName>
    <alternativeName>
        <fullName>Endopeptidase 24.15</fullName>
    </alternativeName>
</protein>
<proteinExistence type="evidence at transcript level"/>
<accession>P47788</accession>
<reference key="1">
    <citation type="journal article" date="1994" name="Eur. J. Biochem.">
        <title>Cloning, amino acid sequence and tissue distribution of porcine thimet oligopeptidase. A comparison with soluble angiotensin-binding protein.</title>
        <authorList>
            <person name="Kato A."/>
            <person name="Sugiura N."/>
            <person name="Hagiwara H."/>
            <person name="Hirose S."/>
        </authorList>
    </citation>
    <scope>NUCLEOTIDE SEQUENCE [MRNA]</scope>
    <scope>TISSUE SPECIFICITY</scope>
    <source>
        <tissue>Liver</tissue>
    </source>
</reference>
<reference key="2">
    <citation type="journal article" date="1997" name="J. Biol. Chem.">
        <title>Targeting of endopeptidase 24.16 to different subcellular compartments by alternative promoter usage.</title>
        <authorList>
            <person name="Kato A."/>
            <person name="Sugiura N."/>
            <person name="Saruta Y."/>
            <person name="Hosoiri T."/>
            <person name="Yasue H."/>
            <person name="Hirose S."/>
        </authorList>
    </citation>
    <scope>NUCLEOTIDE SEQUENCE [GENOMIC DNA]</scope>
    <source>
        <tissue>Liver</tissue>
    </source>
</reference>
<feature type="chain" id="PRO_0000078154" description="Thimet oligopeptidase">
    <location>
        <begin position="1"/>
        <end position="687"/>
    </location>
</feature>
<feature type="active site" evidence="4">
    <location>
        <position position="474"/>
    </location>
</feature>
<feature type="binding site" evidence="4">
    <location>
        <position position="473"/>
    </location>
    <ligand>
        <name>Zn(2+)</name>
        <dbReference type="ChEBI" id="CHEBI:29105"/>
        <note>catalytic</note>
    </ligand>
</feature>
<feature type="binding site" evidence="4">
    <location>
        <position position="477"/>
    </location>
    <ligand>
        <name>Zn(2+)</name>
        <dbReference type="ChEBI" id="CHEBI:29105"/>
        <note>catalytic</note>
    </ligand>
</feature>
<feature type="binding site" evidence="4">
    <location>
        <position position="480"/>
    </location>
    <ligand>
        <name>Zn(2+)</name>
        <dbReference type="ChEBI" id="CHEBI:29105"/>
        <note>catalytic</note>
    </ligand>
</feature>
<feature type="modified residue" description="Phosphoserine" evidence="3">
    <location>
        <position position="172"/>
    </location>
</feature>
<feature type="modified residue" description="Phosphotyrosine" evidence="3">
    <location>
        <position position="278"/>
    </location>
</feature>
<feature type="modified residue" description="N6-acetyllysine" evidence="2">
    <location>
        <position position="538"/>
    </location>
</feature>
<sequence>MKPPAACAGDALDVAAPCSAVNYLRWDLSAQQIGELTTELIEQTKRVYDRVGTQELQDVSYENTLKALADVEVSYTVQRNILDFPQHVSPCKDIRTASTEADKKLSEFDVEMSMRQDVYQRIVWLQEKVQKDSLRPEAARYLERLIKLGRRNGLHLPKETQEKIKSIKKKLSLLCIDFNKNLNEDTTFLPVTREELGGLPEDFLNSLEKTEDEKLKVTLKYPHYFPLLKKCHVPETRRKVEEAFNCRCKEENCAILRELVRLRAQKSSLLGFSTHADYVLEMNMAKTSQVVATFLDELAQKLKPLGEQERAVILELKKAECTKRGLDFDGRINAWDMRYYMNQVEETRYRVDQNLLKEYFPMQVVTRGLLGIYQELLGLTFHLEEGAAVWHEDVMLYSVRDAASGKVIGKFYLDLYPREGKYGHAACFGLQPGCLRQDGSRQIAIAAMVANFTKPTPDAPSLLQHDEVETYFHEFGHVMHQLCSQAEFAMFSGTHVERDFVEAPSQMLENWVWEAEPLLRMSQHYRTGSAIPQELLEKLIKSRQANTGLFNLRQIVLAKVDQALHTQTAADPAEEYARLCQEILGVPATPGTNMPATFGHLAGGYDAQYYGYLWSEVYSADMFHTRFKQEGILSGKVGMDYRSCILRPGGSEDASVMLKLFLGRDPKQDAFLLSKGLQVEGCEPPAS</sequence>